<name>METAA_SYNE7</name>
<organism>
    <name type="scientific">Synechococcus elongatus (strain ATCC 33912 / PCC 7942 / FACHB-805)</name>
    <name type="common">Anacystis nidulans R2</name>
    <dbReference type="NCBI Taxonomy" id="1140"/>
    <lineage>
        <taxon>Bacteria</taxon>
        <taxon>Bacillati</taxon>
        <taxon>Cyanobacteriota</taxon>
        <taxon>Cyanophyceae</taxon>
        <taxon>Synechococcales</taxon>
        <taxon>Synechococcaceae</taxon>
        <taxon>Synechococcus</taxon>
    </lineage>
</organism>
<comment type="function">
    <text evidence="1">Transfers an acetyl group from acetyl-CoA to L-homoserine, forming acetyl-L-homoserine.</text>
</comment>
<comment type="catalytic activity">
    <reaction evidence="1">
        <text>L-homoserine + acetyl-CoA = O-acetyl-L-homoserine + CoA</text>
        <dbReference type="Rhea" id="RHEA:13701"/>
        <dbReference type="ChEBI" id="CHEBI:57287"/>
        <dbReference type="ChEBI" id="CHEBI:57288"/>
        <dbReference type="ChEBI" id="CHEBI:57476"/>
        <dbReference type="ChEBI" id="CHEBI:57716"/>
        <dbReference type="EC" id="2.3.1.31"/>
    </reaction>
</comment>
<comment type="pathway">
    <text evidence="1">Amino-acid biosynthesis; L-methionine biosynthesis via de novo pathway; O-acetyl-L-homoserine from L-homoserine: step 1/1.</text>
</comment>
<comment type="subcellular location">
    <subcellularLocation>
        <location evidence="1">Cytoplasm</location>
    </subcellularLocation>
</comment>
<comment type="similarity">
    <text evidence="1">Belongs to the MetA family.</text>
</comment>
<proteinExistence type="inferred from homology"/>
<gene>
    <name evidence="1" type="primary">metAA</name>
    <name type="ordered locus">Synpcc7942_0371</name>
</gene>
<evidence type="ECO:0000255" key="1">
    <source>
        <dbReference type="HAMAP-Rule" id="MF_00295"/>
    </source>
</evidence>
<keyword id="KW-0012">Acyltransferase</keyword>
<keyword id="KW-0028">Amino-acid biosynthesis</keyword>
<keyword id="KW-0963">Cytoplasm</keyword>
<keyword id="KW-0486">Methionine biosynthesis</keyword>
<keyword id="KW-1185">Reference proteome</keyword>
<keyword id="KW-0808">Transferase</keyword>
<dbReference type="EC" id="2.3.1.31" evidence="1"/>
<dbReference type="EMBL" id="CP000100">
    <property type="protein sequence ID" value="ABB56403.1"/>
    <property type="molecule type" value="Genomic_DNA"/>
</dbReference>
<dbReference type="RefSeq" id="WP_011377550.1">
    <property type="nucleotide sequence ID" value="NZ_JACJTX010000002.1"/>
</dbReference>
<dbReference type="SMR" id="Q31RB6"/>
<dbReference type="STRING" id="1140.Synpcc7942_0371"/>
<dbReference type="PaxDb" id="1140-Synpcc7942_0371"/>
<dbReference type="KEGG" id="syf:Synpcc7942_0371"/>
<dbReference type="eggNOG" id="COG1897">
    <property type="taxonomic scope" value="Bacteria"/>
</dbReference>
<dbReference type="HOGENOM" id="CLU_057851_0_1_3"/>
<dbReference type="OrthoDB" id="9772423at2"/>
<dbReference type="BioCyc" id="SYNEL:SYNPCC7942_0371-MONOMER"/>
<dbReference type="UniPathway" id="UPA00051">
    <property type="reaction ID" value="UER00074"/>
</dbReference>
<dbReference type="Proteomes" id="UP000889800">
    <property type="component" value="Chromosome"/>
</dbReference>
<dbReference type="GO" id="GO:0005737">
    <property type="term" value="C:cytoplasm"/>
    <property type="evidence" value="ECO:0007669"/>
    <property type="project" value="UniProtKB-SubCell"/>
</dbReference>
<dbReference type="GO" id="GO:0004414">
    <property type="term" value="F:homoserine O-acetyltransferase activity"/>
    <property type="evidence" value="ECO:0007669"/>
    <property type="project" value="UniProtKB-EC"/>
</dbReference>
<dbReference type="GO" id="GO:0008899">
    <property type="term" value="F:homoserine O-succinyltransferase activity"/>
    <property type="evidence" value="ECO:0007669"/>
    <property type="project" value="UniProtKB-UniRule"/>
</dbReference>
<dbReference type="GO" id="GO:0019281">
    <property type="term" value="P:L-methionine biosynthetic process from homoserine via O-succinyl-L-homoserine and cystathionine"/>
    <property type="evidence" value="ECO:0007669"/>
    <property type="project" value="InterPro"/>
</dbReference>
<dbReference type="CDD" id="cd03131">
    <property type="entry name" value="GATase1_HTS"/>
    <property type="match status" value="1"/>
</dbReference>
<dbReference type="Gene3D" id="3.40.50.880">
    <property type="match status" value="1"/>
</dbReference>
<dbReference type="HAMAP" id="MF_00295">
    <property type="entry name" value="MetA_acyltransf"/>
    <property type="match status" value="1"/>
</dbReference>
<dbReference type="InterPro" id="IPR029062">
    <property type="entry name" value="Class_I_gatase-like"/>
</dbReference>
<dbReference type="InterPro" id="IPR005697">
    <property type="entry name" value="HST_MetA"/>
</dbReference>
<dbReference type="InterPro" id="IPR033752">
    <property type="entry name" value="MetA_family"/>
</dbReference>
<dbReference type="NCBIfam" id="TIGR01001">
    <property type="entry name" value="metA"/>
    <property type="match status" value="1"/>
</dbReference>
<dbReference type="PANTHER" id="PTHR20919">
    <property type="entry name" value="HOMOSERINE O-SUCCINYLTRANSFERASE"/>
    <property type="match status" value="1"/>
</dbReference>
<dbReference type="PANTHER" id="PTHR20919:SF0">
    <property type="entry name" value="HOMOSERINE O-SUCCINYLTRANSFERASE"/>
    <property type="match status" value="1"/>
</dbReference>
<dbReference type="Pfam" id="PF04204">
    <property type="entry name" value="HTS"/>
    <property type="match status" value="1"/>
</dbReference>
<dbReference type="PIRSF" id="PIRSF000450">
    <property type="entry name" value="H_ser_succinyltr"/>
    <property type="match status" value="1"/>
</dbReference>
<dbReference type="SUPFAM" id="SSF52317">
    <property type="entry name" value="Class I glutamine amidotransferase-like"/>
    <property type="match status" value="1"/>
</dbReference>
<protein>
    <recommendedName>
        <fullName evidence="1">Homoserine O-acetyltransferase</fullName>
        <shortName evidence="1">HAT</shortName>
        <ecNumber evidence="1">2.3.1.31</ecNumber>
    </recommendedName>
    <alternativeName>
        <fullName evidence="1">Homoserine transacetylase</fullName>
        <shortName evidence="1">HTA</shortName>
    </alternativeName>
</protein>
<feature type="chain" id="PRO_1000021857" description="Homoserine O-acetyltransferase">
    <location>
        <begin position="1"/>
        <end position="299"/>
    </location>
</feature>
<feature type="active site" description="Acyl-thioester intermediate" evidence="1">
    <location>
        <position position="142"/>
    </location>
</feature>
<feature type="active site" description="Proton acceptor" evidence="1">
    <location>
        <position position="235"/>
    </location>
</feature>
<feature type="active site" evidence="1">
    <location>
        <position position="237"/>
    </location>
</feature>
<feature type="binding site" evidence="1">
    <location>
        <position position="163"/>
    </location>
    <ligand>
        <name>substrate</name>
    </ligand>
</feature>
<feature type="binding site" evidence="1">
    <location>
        <position position="192"/>
    </location>
    <ligand>
        <name>substrate</name>
    </ligand>
</feature>
<feature type="binding site" evidence="1">
    <location>
        <position position="249"/>
    </location>
    <ligand>
        <name>substrate</name>
    </ligand>
</feature>
<feature type="site" description="Important for acyl-CoA specificity" evidence="1">
    <location>
        <position position="111"/>
    </location>
</feature>
<feature type="site" description="Important for substrate specificity" evidence="1">
    <location>
        <position position="192"/>
    </location>
</feature>
<accession>Q31RB6</accession>
<reference key="1">
    <citation type="submission" date="2005-08" db="EMBL/GenBank/DDBJ databases">
        <title>Complete sequence of chromosome 1 of Synechococcus elongatus PCC 7942.</title>
        <authorList>
            <consortium name="US DOE Joint Genome Institute"/>
            <person name="Copeland A."/>
            <person name="Lucas S."/>
            <person name="Lapidus A."/>
            <person name="Barry K."/>
            <person name="Detter J.C."/>
            <person name="Glavina T."/>
            <person name="Hammon N."/>
            <person name="Israni S."/>
            <person name="Pitluck S."/>
            <person name="Schmutz J."/>
            <person name="Larimer F."/>
            <person name="Land M."/>
            <person name="Kyrpides N."/>
            <person name="Lykidis A."/>
            <person name="Golden S."/>
            <person name="Richardson P."/>
        </authorList>
    </citation>
    <scope>NUCLEOTIDE SEQUENCE [LARGE SCALE GENOMIC DNA]</scope>
    <source>
        <strain>ATCC 33912 / PCC 7942 / FACHB-805</strain>
    </source>
</reference>
<sequence>MPIIIPQDLPARRILDAESVFTLGDADARRQDIRALQVVVLNLMPTKVTTETQIARVLANTPLQVELTLIHTASYQPTHTDPEHLRNFYSTFDQIRDRQFDGLIVTGAPVETLPWLAVDYWSELTTILDWSREAVRSSLFICWGAQAALQHFHGIEKQTLPAKRFGVFWHHLRDRSSPLVRGHDDDFLVPVSRHTEVIAAEVLAQSQLQILAESSEAGLHLLWDADQHRTYLFNHPEYDADTLDREYRRDREKGLPIQLPLNYYPNDDPNQVPRVRWRSHAQLLYTNWLNYEVYQPLSR</sequence>